<dbReference type="EMBL" id="X91957">
    <property type="protein sequence ID" value="CAA63023.1"/>
    <property type="molecule type" value="mRNA"/>
</dbReference>
<dbReference type="EMBL" id="U75192">
    <property type="protein sequence ID" value="AAB51570.1"/>
    <property type="molecule type" value="mRNA"/>
</dbReference>
<dbReference type="EMBL" id="AB010694">
    <property type="protein sequence ID" value="BAB09373.1"/>
    <property type="molecule type" value="Genomic_DNA"/>
</dbReference>
<dbReference type="EMBL" id="CP002688">
    <property type="protein sequence ID" value="AED94405.1"/>
    <property type="molecule type" value="Genomic_DNA"/>
</dbReference>
<dbReference type="EMBL" id="BT003986">
    <property type="protein sequence ID" value="AAO42026.1"/>
    <property type="molecule type" value="mRNA"/>
</dbReference>
<dbReference type="EMBL" id="BT005069">
    <property type="protein sequence ID" value="AAO50602.1"/>
    <property type="molecule type" value="mRNA"/>
</dbReference>
<dbReference type="PIR" id="S71254">
    <property type="entry name" value="S71254"/>
</dbReference>
<dbReference type="RefSeq" id="NP_198735.1">
    <molecule id="P92996-1"/>
    <property type="nucleotide sequence ID" value="NM_123281.4"/>
</dbReference>
<dbReference type="SMR" id="P92996"/>
<dbReference type="BioGRID" id="19165">
    <property type="interactions" value="1"/>
</dbReference>
<dbReference type="FunCoup" id="P92996">
    <property type="interactions" value="33"/>
</dbReference>
<dbReference type="STRING" id="3702.P92996"/>
<dbReference type="GlyCosmos" id="P92996">
    <property type="glycosylation" value="1 site, No reported glycans"/>
</dbReference>
<dbReference type="GlyGen" id="P92996">
    <property type="glycosylation" value="1 site"/>
</dbReference>
<dbReference type="PaxDb" id="3702-AT5G39190.1"/>
<dbReference type="EnsemblPlants" id="AT5G39190.1">
    <molecule id="P92996-1"/>
    <property type="protein sequence ID" value="AT5G39190.1"/>
    <property type="gene ID" value="AT5G39190"/>
</dbReference>
<dbReference type="GeneID" id="833914"/>
<dbReference type="Gramene" id="AT5G39190.1">
    <molecule id="P92996-1"/>
    <property type="protein sequence ID" value="AT5G39190.1"/>
    <property type="gene ID" value="AT5G39190"/>
</dbReference>
<dbReference type="KEGG" id="ath:AT5G39190"/>
<dbReference type="Araport" id="AT5G39190"/>
<dbReference type="TAIR" id="AT5G39190">
    <property type="gene designation" value="GER2"/>
</dbReference>
<dbReference type="eggNOG" id="ENOG502QQ4A">
    <property type="taxonomic scope" value="Eukaryota"/>
</dbReference>
<dbReference type="HOGENOM" id="CLU_015790_0_0_1"/>
<dbReference type="InParanoid" id="P92996"/>
<dbReference type="OMA" id="MTMSIRL"/>
<dbReference type="PhylomeDB" id="P92996"/>
<dbReference type="PRO" id="PR:P92996"/>
<dbReference type="Proteomes" id="UP000006548">
    <property type="component" value="Chromosome 5"/>
</dbReference>
<dbReference type="ExpressionAtlas" id="P92996">
    <property type="expression patterns" value="baseline and differential"/>
</dbReference>
<dbReference type="GO" id="GO:0048046">
    <property type="term" value="C:apoplast"/>
    <property type="evidence" value="ECO:0007669"/>
    <property type="project" value="UniProtKB-SubCell"/>
</dbReference>
<dbReference type="GO" id="GO:0031012">
    <property type="term" value="C:extracellular matrix"/>
    <property type="evidence" value="ECO:0000314"/>
    <property type="project" value="TAIR"/>
</dbReference>
<dbReference type="GO" id="GO:0030145">
    <property type="term" value="F:manganese ion binding"/>
    <property type="evidence" value="ECO:0007669"/>
    <property type="project" value="InterPro"/>
</dbReference>
<dbReference type="CDD" id="cd02241">
    <property type="entry name" value="cupin_OxOx"/>
    <property type="match status" value="1"/>
</dbReference>
<dbReference type="FunFam" id="2.60.120.10:FF:000005">
    <property type="entry name" value="Germin-like protein subfamily 1 member 8"/>
    <property type="match status" value="1"/>
</dbReference>
<dbReference type="Gene3D" id="2.60.120.10">
    <property type="entry name" value="Jelly Rolls"/>
    <property type="match status" value="1"/>
</dbReference>
<dbReference type="InterPro" id="IPR006045">
    <property type="entry name" value="Cupin_1"/>
</dbReference>
<dbReference type="InterPro" id="IPR001929">
    <property type="entry name" value="Germin"/>
</dbReference>
<dbReference type="InterPro" id="IPR019780">
    <property type="entry name" value="Germin_Mn-BS"/>
</dbReference>
<dbReference type="InterPro" id="IPR014710">
    <property type="entry name" value="RmlC-like_jellyroll"/>
</dbReference>
<dbReference type="InterPro" id="IPR011051">
    <property type="entry name" value="RmlC_Cupin_sf"/>
</dbReference>
<dbReference type="PANTHER" id="PTHR31238">
    <property type="entry name" value="GERMIN-LIKE PROTEIN SUBFAMILY 3 MEMBER 3"/>
    <property type="match status" value="1"/>
</dbReference>
<dbReference type="Pfam" id="PF00190">
    <property type="entry name" value="Cupin_1"/>
    <property type="match status" value="1"/>
</dbReference>
<dbReference type="PRINTS" id="PR00325">
    <property type="entry name" value="GERMIN"/>
</dbReference>
<dbReference type="SMART" id="SM00835">
    <property type="entry name" value="Cupin_1"/>
    <property type="match status" value="1"/>
</dbReference>
<dbReference type="SUPFAM" id="SSF51182">
    <property type="entry name" value="RmlC-like cupins"/>
    <property type="match status" value="1"/>
</dbReference>
<dbReference type="PROSITE" id="PS00725">
    <property type="entry name" value="GERMIN"/>
    <property type="match status" value="1"/>
</dbReference>
<comment type="function">
    <text>May play a role in plant defense. Probably has no oxalate oxidase activity even if the active site is conserved.</text>
</comment>
<comment type="subunit">
    <text evidence="1">Oligomer (believed to be a pentamer but probably hexamer).</text>
</comment>
<comment type="subcellular location">
    <subcellularLocation>
        <location evidence="1">Secreted</location>
        <location evidence="1">Extracellular space</location>
        <location evidence="1">Apoplast</location>
    </subcellularLocation>
</comment>
<comment type="alternative products">
    <event type="alternative splicing"/>
    <isoform>
        <id>P92996-1</id>
        <name>1</name>
        <sequence type="displayed"/>
    </isoform>
    <text>A number of isoforms are produced. According to EST sequences.</text>
</comment>
<comment type="tissue specificity">
    <text>Expressed in stems and developing embryos.</text>
</comment>
<comment type="similarity">
    <text evidence="3">Belongs to the germin family.</text>
</comment>
<name>GL120_ARATH</name>
<organism>
    <name type="scientific">Arabidopsis thaliana</name>
    <name type="common">Mouse-ear cress</name>
    <dbReference type="NCBI Taxonomy" id="3702"/>
    <lineage>
        <taxon>Eukaryota</taxon>
        <taxon>Viridiplantae</taxon>
        <taxon>Streptophyta</taxon>
        <taxon>Embryophyta</taxon>
        <taxon>Tracheophyta</taxon>
        <taxon>Spermatophyta</taxon>
        <taxon>Magnoliopsida</taxon>
        <taxon>eudicotyledons</taxon>
        <taxon>Gunneridae</taxon>
        <taxon>Pentapetalae</taxon>
        <taxon>rosids</taxon>
        <taxon>malvids</taxon>
        <taxon>Brassicales</taxon>
        <taxon>Brassicaceae</taxon>
        <taxon>Camelineae</taxon>
        <taxon>Arabidopsis</taxon>
    </lineage>
</organism>
<gene>
    <name type="primary">GLP5A</name>
    <name type="synonym">GER2</name>
    <name type="synonym">GERM2</name>
    <name type="synonym">GLP2A</name>
    <name type="synonym">GLP2B</name>
    <name type="ordered locus">At5g39190</name>
    <name type="ORF">K3K3.6</name>
</gene>
<keyword id="KW-0025">Alternative splicing</keyword>
<keyword id="KW-0052">Apoplast</keyword>
<keyword id="KW-1015">Disulfide bond</keyword>
<keyword id="KW-0325">Glycoprotein</keyword>
<keyword id="KW-0464">Manganese</keyword>
<keyword id="KW-0479">Metal-binding</keyword>
<keyword id="KW-1185">Reference proteome</keyword>
<keyword id="KW-0964">Secreted</keyword>
<keyword id="KW-0732">Signal</keyword>
<reference key="1">
    <citation type="journal article" date="1997" name="Plant Mol. Biol.">
        <title>cDNA sequence, genomic organization and differential expression of three Arabidopsis genes for germin/oxalate oxidase-like proteins.</title>
        <authorList>
            <person name="Membre N."/>
            <person name="Berna A."/>
            <person name="Neutelings G."/>
            <person name="David A."/>
            <person name="David H."/>
            <person name="Staiger D."/>
            <person name="Saez Vasquez J."/>
            <person name="Raynal M."/>
            <person name="Delseny M."/>
            <person name="Bernier F."/>
        </authorList>
    </citation>
    <scope>NUCLEOTIDE SEQUENCE [MRNA]</scope>
    <source>
        <strain>cv. Columbia</strain>
    </source>
</reference>
<reference key="2">
    <citation type="journal article" date="1998" name="Plant Mol. Biol.">
        <title>Arabidopsis thaliana contains a large family of germin-like proteins: characterization of cDNA and genomic sequences encoding 12 unique family members.</title>
        <authorList>
            <person name="Carter C."/>
            <person name="Graham R.A."/>
            <person name="Thornburg R.W."/>
        </authorList>
    </citation>
    <scope>NUCLEOTIDE SEQUENCE [MRNA]</scope>
    <source>
        <strain>cv. Columbia</strain>
    </source>
</reference>
<reference key="3">
    <citation type="journal article" date="1998" name="DNA Res.">
        <title>Structural analysis of Arabidopsis thaliana chromosome 5. V. Sequence features of the regions of 1,381,565 bp covered by twenty one physically assigned P1 and TAC clones.</title>
        <authorList>
            <person name="Kaneko T."/>
            <person name="Kotani H."/>
            <person name="Nakamura Y."/>
            <person name="Sato S."/>
            <person name="Asamizu E."/>
            <person name="Miyajima N."/>
            <person name="Tabata S."/>
        </authorList>
    </citation>
    <scope>NUCLEOTIDE SEQUENCE [LARGE SCALE GENOMIC DNA]</scope>
    <source>
        <strain>cv. Columbia</strain>
    </source>
</reference>
<reference key="4">
    <citation type="journal article" date="2017" name="Plant J.">
        <title>Araport11: a complete reannotation of the Arabidopsis thaliana reference genome.</title>
        <authorList>
            <person name="Cheng C.Y."/>
            <person name="Krishnakumar V."/>
            <person name="Chan A.P."/>
            <person name="Thibaud-Nissen F."/>
            <person name="Schobel S."/>
            <person name="Town C.D."/>
        </authorList>
    </citation>
    <scope>GENOME REANNOTATION</scope>
    <source>
        <strain>cv. Columbia</strain>
    </source>
</reference>
<reference key="5">
    <citation type="journal article" date="2003" name="Science">
        <title>Empirical analysis of transcriptional activity in the Arabidopsis genome.</title>
        <authorList>
            <person name="Yamada K."/>
            <person name="Lim J."/>
            <person name="Dale J.M."/>
            <person name="Chen H."/>
            <person name="Shinn P."/>
            <person name="Palm C.J."/>
            <person name="Southwick A.M."/>
            <person name="Wu H.C."/>
            <person name="Kim C.J."/>
            <person name="Nguyen M."/>
            <person name="Pham P.K."/>
            <person name="Cheuk R.F."/>
            <person name="Karlin-Newmann G."/>
            <person name="Liu S.X."/>
            <person name="Lam B."/>
            <person name="Sakano H."/>
            <person name="Wu T."/>
            <person name="Yu G."/>
            <person name="Miranda M."/>
            <person name="Quach H.L."/>
            <person name="Tripp M."/>
            <person name="Chang C.H."/>
            <person name="Lee J.M."/>
            <person name="Toriumi M.J."/>
            <person name="Chan M.M."/>
            <person name="Tang C.C."/>
            <person name="Onodera C.S."/>
            <person name="Deng J.M."/>
            <person name="Akiyama K."/>
            <person name="Ansari Y."/>
            <person name="Arakawa T."/>
            <person name="Banh J."/>
            <person name="Banno F."/>
            <person name="Bowser L."/>
            <person name="Brooks S.Y."/>
            <person name="Carninci P."/>
            <person name="Chao Q."/>
            <person name="Choy N."/>
            <person name="Enju A."/>
            <person name="Goldsmith A.D."/>
            <person name="Gurjal M."/>
            <person name="Hansen N.F."/>
            <person name="Hayashizaki Y."/>
            <person name="Johnson-Hopson C."/>
            <person name="Hsuan V.W."/>
            <person name="Iida K."/>
            <person name="Karnes M."/>
            <person name="Khan S."/>
            <person name="Koesema E."/>
            <person name="Ishida J."/>
            <person name="Jiang P.X."/>
            <person name="Jones T."/>
            <person name="Kawai J."/>
            <person name="Kamiya A."/>
            <person name="Meyers C."/>
            <person name="Nakajima M."/>
            <person name="Narusaka M."/>
            <person name="Seki M."/>
            <person name="Sakurai T."/>
            <person name="Satou M."/>
            <person name="Tamse R."/>
            <person name="Vaysberg M."/>
            <person name="Wallender E.K."/>
            <person name="Wong C."/>
            <person name="Yamamura Y."/>
            <person name="Yuan S."/>
            <person name="Shinozaki K."/>
            <person name="Davis R.W."/>
            <person name="Theologis A."/>
            <person name="Ecker J.R."/>
        </authorList>
    </citation>
    <scope>NUCLEOTIDE SEQUENCE [LARGE SCALE MRNA]</scope>
    <source>
        <strain>cv. Columbia</strain>
    </source>
</reference>
<reference key="6">
    <citation type="journal article" date="2000" name="Planta">
        <title>Arabidopsis thaliana germin-like proteins: common and specific features point to a variety of functions.</title>
        <authorList>
            <person name="Membre N."/>
            <person name="Bernier F."/>
            <person name="Staiger D."/>
            <person name="Berna A."/>
        </authorList>
    </citation>
    <scope>CHARACTERIZATION</scope>
</reference>
<protein>
    <recommendedName>
        <fullName>Germin-like protein subfamily 1 member 20</fullName>
    </recommendedName>
    <alternativeName>
        <fullName>GLP2a copy 2</fullName>
    </alternativeName>
    <alternativeName>
        <fullName>GLP2b</fullName>
    </alternativeName>
    <alternativeName>
        <fullName>Germin type 2</fullName>
        <shortName>At-GERM2</shortName>
        <shortName>AtGER2</shortName>
    </alternativeName>
</protein>
<proteinExistence type="evidence at protein level"/>
<evidence type="ECO:0000250" key="1"/>
<evidence type="ECO:0000255" key="2"/>
<evidence type="ECO:0000305" key="3"/>
<sequence>MRVSQSLVPFAIIALVLSFVNAYDPSPLQDFCVAIDDLKGVFVNGRFCKDPKRVDAKDFFFSGLNVPGNTNNQVGSNVTTVNVDQIPGLNTMGISLVRIDYAPHGQNPPHTHPRGSEILVLVEGTLYVGFVSSNQDNNRLFAKVLHPGDVFVFPIGMIHFQVNVGKIPAVAFAGLSSQNAGVITIANTVFGSNPPIYPELLARAFQLDASVVKELQAKFGSI</sequence>
<accession>P92996</accession>
<accession>Q39106</accession>
<feature type="signal peptide" evidence="2">
    <location>
        <begin position="1"/>
        <end position="22"/>
    </location>
</feature>
<feature type="chain" id="PRO_0000010820" description="Germin-like protein subfamily 1 member 20">
    <location>
        <begin position="23"/>
        <end position="222"/>
    </location>
</feature>
<feature type="domain" description="Cupin type-1" evidence="2">
    <location>
        <begin position="62"/>
        <end position="213"/>
    </location>
</feature>
<feature type="binding site" evidence="1">
    <location>
        <position position="110"/>
    </location>
    <ligand>
        <name>Mn(2+)</name>
        <dbReference type="ChEBI" id="CHEBI:29035"/>
    </ligand>
</feature>
<feature type="binding site" evidence="1">
    <location>
        <position position="112"/>
    </location>
    <ligand>
        <name>Mn(2+)</name>
        <dbReference type="ChEBI" id="CHEBI:29035"/>
    </ligand>
</feature>
<feature type="binding site" evidence="1">
    <location>
        <position position="117"/>
    </location>
    <ligand>
        <name>Mn(2+)</name>
        <dbReference type="ChEBI" id="CHEBI:29035"/>
    </ligand>
</feature>
<feature type="binding site" evidence="1">
    <location>
        <position position="159"/>
    </location>
    <ligand>
        <name>Mn(2+)</name>
        <dbReference type="ChEBI" id="CHEBI:29035"/>
    </ligand>
</feature>
<feature type="glycosylation site" description="N-linked (GlcNAc...) asparagine" evidence="2">
    <location>
        <position position="77"/>
    </location>
</feature>
<feature type="disulfide bond" evidence="1">
    <location>
        <begin position="32"/>
        <end position="48"/>
    </location>
</feature>
<feature type="sequence conflict" description="In Ref. 1; CAA63023." evidence="3" ref="1">
    <original>G</original>
    <variation>A</variation>
    <location>
        <position position="63"/>
    </location>
</feature>
<feature type="sequence conflict" description="In Ref. 1; CAA63023." evidence="3" ref="1">
    <original>RI</original>
    <variation>LV</variation>
    <location>
        <begin position="98"/>
        <end position="99"/>
    </location>
</feature>
<feature type="sequence conflict" description="In Ref. 1; CAA63023." evidence="3" ref="1">
    <original>N</original>
    <variation>D</variation>
    <location>
        <position position="107"/>
    </location>
</feature>
<feature type="sequence conflict" description="In Ref. 1; CAA63023." evidence="3" ref="1">
    <original>Q</original>
    <variation>L</variation>
    <location>
        <position position="135"/>
    </location>
</feature>